<gene>
    <name evidence="1" type="primary">caiE</name>
    <name type="ordered locus">SeHA_C0073</name>
</gene>
<protein>
    <recommendedName>
        <fullName evidence="1">Carnitine operon protein CaiE</fullName>
    </recommendedName>
</protein>
<sequence>MSYYAFEGLIPVVHPDAFVHPSAVLIGDVIVGAGVYIGPLASLRGDYGRLILEAGSNLQDGCIMHGYCDTDTIVHENGHIGHGAILHGCVVGRDALVGMNSVIMDGAVIGEESIVAAMSFVKAGFQGEARQLLVGSPARVLRQVTDQELHWKRLNTKEYQDLAIRCRTGLSETKPLTQVEENRPRLKGTTDVKPKSAQ</sequence>
<proteinExistence type="inferred from homology"/>
<accession>B4TIG8</accession>
<feature type="chain" id="PRO_1000200934" description="Carnitine operon protein CaiE">
    <location>
        <begin position="1"/>
        <end position="198"/>
    </location>
</feature>
<feature type="region of interest" description="Disordered" evidence="2">
    <location>
        <begin position="179"/>
        <end position="198"/>
    </location>
</feature>
<feature type="compositionally biased region" description="Basic and acidic residues" evidence="2">
    <location>
        <begin position="180"/>
        <end position="198"/>
    </location>
</feature>
<dbReference type="EMBL" id="CP001120">
    <property type="protein sequence ID" value="ACF70308.1"/>
    <property type="molecule type" value="Genomic_DNA"/>
</dbReference>
<dbReference type="RefSeq" id="WP_000122863.1">
    <property type="nucleotide sequence ID" value="NC_011083.1"/>
</dbReference>
<dbReference type="SMR" id="B4TIG8"/>
<dbReference type="KEGG" id="seh:SeHA_C0073"/>
<dbReference type="HOGENOM" id="CLU_064827_4_2_6"/>
<dbReference type="UniPathway" id="UPA00117"/>
<dbReference type="Proteomes" id="UP000001866">
    <property type="component" value="Chromosome"/>
</dbReference>
<dbReference type="GO" id="GO:0016740">
    <property type="term" value="F:transferase activity"/>
    <property type="evidence" value="ECO:0007669"/>
    <property type="project" value="UniProtKB-KW"/>
</dbReference>
<dbReference type="GO" id="GO:0009437">
    <property type="term" value="P:carnitine metabolic process"/>
    <property type="evidence" value="ECO:0007669"/>
    <property type="project" value="UniProtKB-UniRule"/>
</dbReference>
<dbReference type="CDD" id="cd04745">
    <property type="entry name" value="LbH_paaY_like"/>
    <property type="match status" value="1"/>
</dbReference>
<dbReference type="FunFam" id="2.160.10.10:FF:000012">
    <property type="entry name" value="Carnitine operon protein CaiE"/>
    <property type="match status" value="1"/>
</dbReference>
<dbReference type="Gene3D" id="2.160.10.10">
    <property type="entry name" value="Hexapeptide repeat proteins"/>
    <property type="match status" value="1"/>
</dbReference>
<dbReference type="HAMAP" id="MF_01525">
    <property type="entry name" value="CaiE"/>
    <property type="match status" value="1"/>
</dbReference>
<dbReference type="InterPro" id="IPR023446">
    <property type="entry name" value="CaiE"/>
</dbReference>
<dbReference type="InterPro" id="IPR001451">
    <property type="entry name" value="Hexapep"/>
</dbReference>
<dbReference type="InterPro" id="IPR050484">
    <property type="entry name" value="Transf_Hexapept/Carb_Anhydrase"/>
</dbReference>
<dbReference type="InterPro" id="IPR011004">
    <property type="entry name" value="Trimer_LpxA-like_sf"/>
</dbReference>
<dbReference type="NCBIfam" id="NF010150">
    <property type="entry name" value="PRK13627.1"/>
    <property type="match status" value="1"/>
</dbReference>
<dbReference type="PANTHER" id="PTHR13061">
    <property type="entry name" value="DYNACTIN SUBUNIT P25"/>
    <property type="match status" value="1"/>
</dbReference>
<dbReference type="PANTHER" id="PTHR13061:SF29">
    <property type="entry name" value="GAMMA CARBONIC ANHYDRASE-LIKE 1, MITOCHONDRIAL-RELATED"/>
    <property type="match status" value="1"/>
</dbReference>
<dbReference type="Pfam" id="PF00132">
    <property type="entry name" value="Hexapep"/>
    <property type="match status" value="2"/>
</dbReference>
<dbReference type="SUPFAM" id="SSF51161">
    <property type="entry name" value="Trimeric LpxA-like enzymes"/>
    <property type="match status" value="1"/>
</dbReference>
<keyword id="KW-0677">Repeat</keyword>
<keyword id="KW-0808">Transferase</keyword>
<comment type="function">
    <text evidence="1">Overproduction of CaiE stimulates the activity of CaiB and CaiD.</text>
</comment>
<comment type="pathway">
    <text evidence="1">Amine and polyamine metabolism; carnitine metabolism.</text>
</comment>
<comment type="similarity">
    <text evidence="1">Belongs to the transferase hexapeptide repeat family.</text>
</comment>
<name>CAIE_SALHS</name>
<organism>
    <name type="scientific">Salmonella heidelberg (strain SL476)</name>
    <dbReference type="NCBI Taxonomy" id="454169"/>
    <lineage>
        <taxon>Bacteria</taxon>
        <taxon>Pseudomonadati</taxon>
        <taxon>Pseudomonadota</taxon>
        <taxon>Gammaproteobacteria</taxon>
        <taxon>Enterobacterales</taxon>
        <taxon>Enterobacteriaceae</taxon>
        <taxon>Salmonella</taxon>
    </lineage>
</organism>
<evidence type="ECO:0000255" key="1">
    <source>
        <dbReference type="HAMAP-Rule" id="MF_01525"/>
    </source>
</evidence>
<evidence type="ECO:0000256" key="2">
    <source>
        <dbReference type="SAM" id="MobiDB-lite"/>
    </source>
</evidence>
<reference key="1">
    <citation type="journal article" date="2011" name="J. Bacteriol.">
        <title>Comparative genomics of 28 Salmonella enterica isolates: evidence for CRISPR-mediated adaptive sublineage evolution.</title>
        <authorList>
            <person name="Fricke W.F."/>
            <person name="Mammel M.K."/>
            <person name="McDermott P.F."/>
            <person name="Tartera C."/>
            <person name="White D.G."/>
            <person name="Leclerc J.E."/>
            <person name="Ravel J."/>
            <person name="Cebula T.A."/>
        </authorList>
    </citation>
    <scope>NUCLEOTIDE SEQUENCE [LARGE SCALE GENOMIC DNA]</scope>
    <source>
        <strain>SL476</strain>
    </source>
</reference>